<reference key="1">
    <citation type="journal article" date="2005" name="J. Bacteriol.">
        <title>Insights on evolution of virulence and resistance from the complete genome analysis of an early methicillin-resistant Staphylococcus aureus strain and a biofilm-producing methicillin-resistant Staphylococcus epidermidis strain.</title>
        <authorList>
            <person name="Gill S.R."/>
            <person name="Fouts D.E."/>
            <person name="Archer G.L."/>
            <person name="Mongodin E.F."/>
            <person name="DeBoy R.T."/>
            <person name="Ravel J."/>
            <person name="Paulsen I.T."/>
            <person name="Kolonay J.F."/>
            <person name="Brinkac L.M."/>
            <person name="Beanan M.J."/>
            <person name="Dodson R.J."/>
            <person name="Daugherty S.C."/>
            <person name="Madupu R."/>
            <person name="Angiuoli S.V."/>
            <person name="Durkin A.S."/>
            <person name="Haft D.H."/>
            <person name="Vamathevan J.J."/>
            <person name="Khouri H."/>
            <person name="Utterback T.R."/>
            <person name="Lee C."/>
            <person name="Dimitrov G."/>
            <person name="Jiang L."/>
            <person name="Qin H."/>
            <person name="Weidman J."/>
            <person name="Tran K."/>
            <person name="Kang K.H."/>
            <person name="Hance I.R."/>
            <person name="Nelson K.E."/>
            <person name="Fraser C.M."/>
        </authorList>
    </citation>
    <scope>NUCLEOTIDE SEQUENCE [LARGE SCALE GENOMIC DNA]</scope>
    <source>
        <strain>ATCC 35984 / DSM 28319 / BCRC 17069 / CCUG 31568 / BM 3577 / RP62A</strain>
    </source>
</reference>
<sequence length="272" mass="30310">MTRQWETLREYDEIKYEFFEGIAKVTINRPEVRNAFTPKTVAEMIDAFSRARDDQNVSVIVLTGEGDKAFCSGGDQKKRGHGGYVGEDDIPRLNVLDLQRLIRVIPKPVIAMVRGYAIGGGNVLNVVCDLTIAADNAIFGQTGPKVGSFDAGYGSGYLARIVGHKKAREIWYLCRQYNAQEALDMGLVNTVVPLEQVEDETVKWCKDIMQHSPTALRFLKAAMNADTDGLAGLQQMAGDATLLYYTTDEAKEGRDAFKEKRNPDFDQFPKFP</sequence>
<accession>Q5HQC3</accession>
<name>MENB_STAEQ</name>
<keyword id="KW-0456">Lyase</keyword>
<keyword id="KW-0474">Menaquinone biosynthesis</keyword>
<keyword id="KW-1185">Reference proteome</keyword>
<feature type="chain" id="PRO_0000224820" description="1,4-dihydroxy-2-naphthoyl-CoA synthase">
    <location>
        <begin position="1"/>
        <end position="272"/>
    </location>
</feature>
<feature type="binding site" description="in other chain" evidence="1">
    <location>
        <position position="33"/>
    </location>
    <ligand>
        <name>substrate</name>
        <note>ligand shared between two neighboring subunits</note>
    </ligand>
</feature>
<feature type="binding site" description="in other chain" evidence="1">
    <location>
        <begin position="72"/>
        <end position="76"/>
    </location>
    <ligand>
        <name>substrate</name>
        <note>ligand shared between two neighboring subunits</note>
    </ligand>
</feature>
<feature type="binding site" description="in other chain" evidence="1">
    <location>
        <position position="84"/>
    </location>
    <ligand>
        <name>substrate</name>
        <note>ligand shared between two neighboring subunits</note>
    </ligand>
</feature>
<feature type="binding site" description="in other chain" evidence="1">
    <location>
        <begin position="116"/>
        <end position="120"/>
    </location>
    <ligand>
        <name>substrate</name>
        <note>ligand shared between two neighboring subunits</note>
    </ligand>
</feature>
<feature type="binding site" evidence="1">
    <location>
        <begin position="141"/>
        <end position="143"/>
    </location>
    <ligand>
        <name>hydrogencarbonate</name>
        <dbReference type="ChEBI" id="CHEBI:17544"/>
    </ligand>
</feature>
<feature type="binding site" description="in other chain" evidence="1">
    <location>
        <position position="142"/>
    </location>
    <ligand>
        <name>substrate</name>
        <note>ligand shared between two neighboring subunits</note>
    </ligand>
</feature>
<feature type="binding site" description="in other chain" evidence="1">
    <location>
        <position position="148"/>
    </location>
    <ligand>
        <name>substrate</name>
        <note>ligand shared between two neighboring subunits</note>
    </ligand>
</feature>
<feature type="binding site" evidence="1">
    <location>
        <position position="245"/>
    </location>
    <ligand>
        <name>substrate</name>
        <note>ligand shared between two neighboring subunits</note>
    </ligand>
</feature>
<feature type="binding site" evidence="1">
    <location>
        <position position="260"/>
    </location>
    <ligand>
        <name>substrate</name>
        <note>ligand shared between two neighboring subunits</note>
    </ligand>
</feature>
<feature type="site" description="Important for catalysis" evidence="1">
    <location>
        <position position="84"/>
    </location>
</feature>
<feature type="site" description="Important for catalysis" evidence="1">
    <location>
        <position position="245"/>
    </location>
</feature>
<gene>
    <name evidence="1" type="primary">menB</name>
    <name type="ordered locus">SERP0632</name>
</gene>
<evidence type="ECO:0000255" key="1">
    <source>
        <dbReference type="HAMAP-Rule" id="MF_01934"/>
    </source>
</evidence>
<comment type="function">
    <text evidence="1">Converts o-succinylbenzoyl-CoA (OSB-CoA) to 1,4-dihydroxy-2-naphthoyl-CoA (DHNA-CoA).</text>
</comment>
<comment type="catalytic activity">
    <reaction evidence="1">
        <text>2-succinylbenzoyl-CoA + H(+) = 1,4-dihydroxy-2-naphthoyl-CoA + H2O</text>
        <dbReference type="Rhea" id="RHEA:26562"/>
        <dbReference type="ChEBI" id="CHEBI:15377"/>
        <dbReference type="ChEBI" id="CHEBI:15378"/>
        <dbReference type="ChEBI" id="CHEBI:57364"/>
        <dbReference type="ChEBI" id="CHEBI:58897"/>
        <dbReference type="EC" id="4.1.3.36"/>
    </reaction>
</comment>
<comment type="cofactor">
    <cofactor evidence="1">
        <name>hydrogencarbonate</name>
        <dbReference type="ChEBI" id="CHEBI:17544"/>
    </cofactor>
</comment>
<comment type="pathway">
    <text evidence="1">Quinol/quinone metabolism; 1,4-dihydroxy-2-naphthoate biosynthesis; 1,4-dihydroxy-2-naphthoate from chorismate: step 6/7.</text>
</comment>
<comment type="pathway">
    <text evidence="1">Quinol/quinone metabolism; menaquinone biosynthesis.</text>
</comment>
<comment type="similarity">
    <text evidence="1">Belongs to the enoyl-CoA hydratase/isomerase family. MenB subfamily.</text>
</comment>
<dbReference type="EC" id="4.1.3.36" evidence="1"/>
<dbReference type="EMBL" id="CP000029">
    <property type="protein sequence ID" value="AAW53957.1"/>
    <property type="molecule type" value="Genomic_DNA"/>
</dbReference>
<dbReference type="RefSeq" id="WP_001831706.1">
    <property type="nucleotide sequence ID" value="NC_002976.3"/>
</dbReference>
<dbReference type="SMR" id="Q5HQC3"/>
<dbReference type="STRING" id="176279.SERP0632"/>
<dbReference type="GeneID" id="50019114"/>
<dbReference type="KEGG" id="ser:SERP0632"/>
<dbReference type="eggNOG" id="COG0447">
    <property type="taxonomic scope" value="Bacteria"/>
</dbReference>
<dbReference type="HOGENOM" id="CLU_009834_7_7_9"/>
<dbReference type="UniPathway" id="UPA00079"/>
<dbReference type="UniPathway" id="UPA01057">
    <property type="reaction ID" value="UER00167"/>
</dbReference>
<dbReference type="Proteomes" id="UP000000531">
    <property type="component" value="Chromosome"/>
</dbReference>
<dbReference type="GO" id="GO:0005829">
    <property type="term" value="C:cytosol"/>
    <property type="evidence" value="ECO:0007669"/>
    <property type="project" value="TreeGrafter"/>
</dbReference>
<dbReference type="GO" id="GO:0008935">
    <property type="term" value="F:1,4-dihydroxy-2-naphthoyl-CoA synthase activity"/>
    <property type="evidence" value="ECO:0007669"/>
    <property type="project" value="UniProtKB-UniRule"/>
</dbReference>
<dbReference type="GO" id="GO:0009234">
    <property type="term" value="P:menaquinone biosynthetic process"/>
    <property type="evidence" value="ECO:0007669"/>
    <property type="project" value="UniProtKB-UniRule"/>
</dbReference>
<dbReference type="CDD" id="cd06558">
    <property type="entry name" value="crotonase-like"/>
    <property type="match status" value="1"/>
</dbReference>
<dbReference type="FunFam" id="1.10.12.10:FF:000003">
    <property type="entry name" value="1,4-dihydroxy-2-naphthoyl-CoA synthase"/>
    <property type="match status" value="1"/>
</dbReference>
<dbReference type="FunFam" id="3.90.226.10:FF:000003">
    <property type="entry name" value="1,4-dihydroxy-2-naphthoyl-CoA synthase"/>
    <property type="match status" value="1"/>
</dbReference>
<dbReference type="Gene3D" id="3.90.226.10">
    <property type="entry name" value="2-enoyl-CoA Hydratase, Chain A, domain 1"/>
    <property type="match status" value="1"/>
</dbReference>
<dbReference type="Gene3D" id="1.10.12.10">
    <property type="entry name" value="Lyase 2-enoyl-coa Hydratase, Chain A, domain 2"/>
    <property type="match status" value="1"/>
</dbReference>
<dbReference type="HAMAP" id="MF_01934">
    <property type="entry name" value="MenB"/>
    <property type="match status" value="1"/>
</dbReference>
<dbReference type="InterPro" id="IPR029045">
    <property type="entry name" value="ClpP/crotonase-like_dom_sf"/>
</dbReference>
<dbReference type="InterPro" id="IPR010198">
    <property type="entry name" value="DHNA-CoA_synthase_MenB"/>
</dbReference>
<dbReference type="InterPro" id="IPR018376">
    <property type="entry name" value="Enoyl-CoA_hyd/isom_CS"/>
</dbReference>
<dbReference type="InterPro" id="IPR001753">
    <property type="entry name" value="Enoyl-CoA_hydra/iso"/>
</dbReference>
<dbReference type="InterPro" id="IPR014748">
    <property type="entry name" value="Enoyl-CoA_hydra_C"/>
</dbReference>
<dbReference type="NCBIfam" id="TIGR01929">
    <property type="entry name" value="menB"/>
    <property type="match status" value="1"/>
</dbReference>
<dbReference type="NCBIfam" id="NF005637">
    <property type="entry name" value="PRK07396.1"/>
    <property type="match status" value="1"/>
</dbReference>
<dbReference type="PANTHER" id="PTHR43113:SF1">
    <property type="entry name" value="1,4-DIHYDROXY-2-NAPHTHOYL-COA SYNTHASE, PEROXISOMAL"/>
    <property type="match status" value="1"/>
</dbReference>
<dbReference type="PANTHER" id="PTHR43113">
    <property type="entry name" value="NUCLEOSIDE-DIPHOSPHATE-SUGAR EPIMERASE"/>
    <property type="match status" value="1"/>
</dbReference>
<dbReference type="Pfam" id="PF00378">
    <property type="entry name" value="ECH_1"/>
    <property type="match status" value="1"/>
</dbReference>
<dbReference type="SUPFAM" id="SSF52096">
    <property type="entry name" value="ClpP/crotonase"/>
    <property type="match status" value="1"/>
</dbReference>
<dbReference type="PROSITE" id="PS00166">
    <property type="entry name" value="ENOYL_COA_HYDRATASE"/>
    <property type="match status" value="1"/>
</dbReference>
<organism>
    <name type="scientific">Staphylococcus epidermidis (strain ATCC 35984 / DSM 28319 / BCRC 17069 / CCUG 31568 / BM 3577 / RP62A)</name>
    <dbReference type="NCBI Taxonomy" id="176279"/>
    <lineage>
        <taxon>Bacteria</taxon>
        <taxon>Bacillati</taxon>
        <taxon>Bacillota</taxon>
        <taxon>Bacilli</taxon>
        <taxon>Bacillales</taxon>
        <taxon>Staphylococcaceae</taxon>
        <taxon>Staphylococcus</taxon>
    </lineage>
</organism>
<protein>
    <recommendedName>
        <fullName evidence="1">1,4-dihydroxy-2-naphthoyl-CoA synthase</fullName>
        <shortName evidence="1">DHNA-CoA synthase</shortName>
        <ecNumber evidence="1">4.1.3.36</ecNumber>
    </recommendedName>
</protein>
<proteinExistence type="inferred from homology"/>